<organism>
    <name type="scientific">Homo sapiens</name>
    <name type="common">Human</name>
    <dbReference type="NCBI Taxonomy" id="9606"/>
    <lineage>
        <taxon>Eukaryota</taxon>
        <taxon>Metazoa</taxon>
        <taxon>Chordata</taxon>
        <taxon>Craniata</taxon>
        <taxon>Vertebrata</taxon>
        <taxon>Euteleostomi</taxon>
        <taxon>Mammalia</taxon>
        <taxon>Eutheria</taxon>
        <taxon>Euarchontoglires</taxon>
        <taxon>Primates</taxon>
        <taxon>Haplorrhini</taxon>
        <taxon>Catarrhini</taxon>
        <taxon>Hominidae</taxon>
        <taxon>Homo</taxon>
    </lineage>
</organism>
<comment type="function">
    <text evidence="7 8 9">Actin-binding protein that enhances membrane ruffling and RAC activation. Enhances the actin-bundling activity of LCP1. Binds calcium. Plays a role in RAC signaling and in phagocytosis. May play a role in macrophage activation and function. Promotes the proliferation of vascular smooth muscle cells and of T-lymphocytes. Enhances lymphocyte migration. Plays a role in vascular inflammation.</text>
</comment>
<comment type="subunit">
    <text evidence="8 9 15">Homodimer (Potential). Monomer. Interacts with LCP1.</text>
</comment>
<comment type="interaction">
    <interactant intactId="EBI-9031341">
        <id>P55008</id>
    </interactant>
    <interactant intactId="EBI-348399">
        <id>P22607</id>
        <label>FGFR3</label>
    </interactant>
    <organismsDiffer>false</organismsDiffer>
    <experiments>3</experiments>
</comment>
<comment type="interaction">
    <interactant intactId="EBI-9031341">
        <id>P55008</id>
    </interactant>
    <interactant intactId="EBI-351506">
        <id>P06396</id>
        <label>GSN</label>
    </interactant>
    <organismsDiffer>false</organismsDiffer>
    <experiments>3</experiments>
</comment>
<comment type="subcellular location">
    <subcellularLocation>
        <location evidence="1">Cytoplasm</location>
        <location evidence="1">Cytoskeleton</location>
    </subcellularLocation>
    <subcellularLocation>
        <location evidence="1">Cell projection</location>
        <location evidence="1">Ruffle membrane</location>
        <topology evidence="1">Peripheral membrane protein</topology>
        <orientation evidence="1">Cytoplasmic side</orientation>
    </subcellularLocation>
    <subcellularLocation>
        <location evidence="1">Cell projection</location>
        <location evidence="1">Phagocytic cup</location>
    </subcellularLocation>
    <text evidence="1">Associated with the actin cytoskeleton at membrane ruffles and at sites of phagocytosis.</text>
</comment>
<comment type="alternative products">
    <event type="alternative splicing"/>
    <isoform>
        <id>P55008-1</id>
        <name>1</name>
        <sequence type="displayed"/>
    </isoform>
    <isoform>
        <id>P55008-2</id>
        <name>2</name>
        <name>G1</name>
        <sequence type="described" ref="VSP_043838"/>
    </isoform>
    <isoform>
        <id>P55008-3</id>
        <name>3</name>
        <sequence type="described" ref="VSP_043837 VSP_043839"/>
    </isoform>
</comment>
<comment type="tissue specificity">
    <text evidence="8">Detected in T-lymphocytes and peripheral blood mononuclear cells.</text>
</comment>
<comment type="PTM">
    <text>Phosphorylated on serine residues.</text>
</comment>
<evidence type="ECO:0000250" key="1">
    <source>
        <dbReference type="UniProtKB" id="O70200"/>
    </source>
</evidence>
<evidence type="ECO:0000250" key="2">
    <source>
        <dbReference type="UniProtKB" id="P81076"/>
    </source>
</evidence>
<evidence type="ECO:0000255" key="3">
    <source>
        <dbReference type="PROSITE-ProRule" id="PRU00448"/>
    </source>
</evidence>
<evidence type="ECO:0000256" key="4">
    <source>
        <dbReference type="SAM" id="MobiDB-lite"/>
    </source>
</evidence>
<evidence type="ECO:0000269" key="5">
    <source>
    </source>
</evidence>
<evidence type="ECO:0000269" key="6">
    <source>
    </source>
</evidence>
<evidence type="ECO:0000269" key="7">
    <source>
    </source>
</evidence>
<evidence type="ECO:0000269" key="8">
    <source>
    </source>
</evidence>
<evidence type="ECO:0000269" key="9">
    <source>
    </source>
</evidence>
<evidence type="ECO:0000303" key="10">
    <source>
    </source>
</evidence>
<evidence type="ECO:0000303" key="11">
    <source ref="11"/>
</evidence>
<evidence type="ECO:0000303" key="12">
    <source ref="7"/>
</evidence>
<evidence type="ECO:0000303" key="13">
    <source ref="8"/>
</evidence>
<evidence type="ECO:0000303" key="14">
    <source ref="9"/>
</evidence>
<evidence type="ECO:0000305" key="15"/>
<evidence type="ECO:0007744" key="16">
    <source>
    </source>
</evidence>
<evidence type="ECO:0007744" key="17">
    <source>
    </source>
</evidence>
<evidence type="ECO:0007744" key="18">
    <source>
    </source>
</evidence>
<evidence type="ECO:0007829" key="19">
    <source>
        <dbReference type="PDB" id="2D58"/>
    </source>
</evidence>
<evidence type="ECO:0007829" key="20">
    <source>
        <dbReference type="PDB" id="2G2B"/>
    </source>
</evidence>
<protein>
    <recommendedName>
        <fullName>Allograft inflammatory factor 1</fullName>
        <shortName>AIF-1</shortName>
    </recommendedName>
    <alternativeName>
        <fullName>Ionized calcium-binding adapter molecule 1</fullName>
    </alternativeName>
    <alternativeName>
        <fullName>Protein G1</fullName>
    </alternativeName>
</protein>
<reference key="1">
    <citation type="journal article" date="1994" name="Hum. Mol. Genet.">
        <title>Characterization of a novel gene in the human major histocompatibility complex that encodes a potential new member of the I kappa B family of proteins.</title>
        <authorList>
            <person name="Albertella M.R."/>
            <person name="Campbell D.R."/>
        </authorList>
    </citation>
    <scope>NUCLEOTIDE SEQUENCE [GENOMIC DNA]</scope>
    <scope>ALTERNATIVE SPLICING (ISOFORMS 1; 2 AND 3)</scope>
</reference>
<reference key="2">
    <citation type="journal article" date="1995" name="Immunogenetics">
        <title>Cloning and genomic characterization of LST1: a new gene in the human TNF region.</title>
        <authorList>
            <person name="Holzinger I."/>
            <person name="de Baey A."/>
            <person name="Messer G."/>
            <person name="Kick G."/>
            <person name="Zwierzina H."/>
            <person name="Weiss E.H."/>
        </authorList>
    </citation>
    <scope>NUCLEOTIDE SEQUENCE [GENOMIC DNA] (ISOFORMS 1; 2 AND 3)</scope>
</reference>
<reference key="3">
    <citation type="journal article" date="1996" name="Biochem. Biophys. Res. Commun.">
        <title>cDNA cloning of human allograft inflammatory factor-1: tissue distribution, cytokine induction, and mRNA expression in injured rat carotid arteries.</title>
        <authorList>
            <person name="Autieri M.V."/>
        </authorList>
    </citation>
    <scope>NUCLEOTIDE SEQUENCE [MRNA] (ISOFORMS 1 AND 3)</scope>
    <source>
        <tissue>Lymphocyte</tissue>
    </source>
</reference>
<reference key="4">
    <citation type="journal article" date="1996" name="Transplantation">
        <title>Allograft inflammatory factory-1. A cytokine-responsive macrophage molecule expressed in transplanted human hearts.</title>
        <authorList>
            <person name="Utans U."/>
            <person name="Quist W.C."/>
            <person name="McManus B.M."/>
            <person name="Wilson J.E."/>
            <person name="Arceci R.J."/>
            <person name="Wallace A.F."/>
            <person name="Russell M.E."/>
        </authorList>
    </citation>
    <scope>NUCLEOTIDE SEQUENCE [MRNA] (ISOFORM 1)</scope>
</reference>
<reference key="5">
    <citation type="journal article" date="1997" name="Genomics">
        <title>Complex expression pattern of the TNF region gene LST1 through differential regulation, initiation, and alternative splicing.</title>
        <authorList>
            <person name="de Baey A."/>
            <person name="Fellerhoff B."/>
            <person name="Maier S."/>
            <person name="Martinozzi S."/>
            <person name="Weidle U."/>
            <person name="Weiss E.H."/>
        </authorList>
    </citation>
    <scope>NUCLEOTIDE SEQUENCE [GENOMIC DNA] (ISOFORMS 1; 2 AND 3)</scope>
    <scope>ALTERNATIVE SPLICING</scope>
</reference>
<reference key="6">
    <citation type="journal article" date="1999" name="J. Immunol.">
        <title>A new member of the Ig superfamily and a V-ATPase G subunit are among the predicted products of novel genes close to the TNF locus in the human MHC.</title>
        <authorList>
            <person name="Neville M.J."/>
            <person name="Campbell R.D."/>
        </authorList>
    </citation>
    <scope>NUCLEOTIDE SEQUENCE [GENOMIC DNA] (ISOFORMS 1; 2 AND 3)</scope>
</reference>
<reference key="7">
    <citation type="submission" date="1996-10" db="EMBL/GenBank/DDBJ databases">
        <title>Novel calcium binding protein, Iba1 (ionized calcium binding adapter molecule 1), which is phosphorylated on serine.</title>
        <authorList>
            <person name="Imai Y."/>
            <person name="Ohsawa K."/>
            <person name="Kohsaka S."/>
        </authorList>
    </citation>
    <scope>NUCLEOTIDE SEQUENCE [MRNA] (ISOFORMS 1 AND 2)</scope>
</reference>
<reference key="8">
    <citation type="submission" date="2000-08" db="EMBL/GenBank/DDBJ databases">
        <title>Upregulation of Allograft inflammatory factor (AIF) is induced by Ab-stimulation in vitro and in human Alzheimer's disease brain.</title>
        <authorList>
            <person name="Deininger M.H."/>
            <person name="Trautmann K."/>
        </authorList>
    </citation>
    <scope>NUCLEOTIDE SEQUENCE [MRNA] (ISOFORM 2)</scope>
    <source>
        <tissue>Glial tumor</tissue>
    </source>
</reference>
<reference key="9">
    <citation type="submission" date="2006-09" db="EMBL/GenBank/DDBJ databases">
        <authorList>
            <person name="Del Galdo F."/>
            <person name="Artlett C."/>
            <person name="Jimenez S.A."/>
        </authorList>
    </citation>
    <scope>NUCLEOTIDE SEQUENCE [MRNA] (ISOFORM 3)</scope>
</reference>
<reference key="10">
    <citation type="journal article" date="2004" name="Nat. Genet.">
        <title>Complete sequencing and characterization of 21,243 full-length human cDNAs.</title>
        <authorList>
            <person name="Ota T."/>
            <person name="Suzuki Y."/>
            <person name="Nishikawa T."/>
            <person name="Otsuki T."/>
            <person name="Sugiyama T."/>
            <person name="Irie R."/>
            <person name="Wakamatsu A."/>
            <person name="Hayashi K."/>
            <person name="Sato H."/>
            <person name="Nagai K."/>
            <person name="Kimura K."/>
            <person name="Makita H."/>
            <person name="Sekine M."/>
            <person name="Obayashi M."/>
            <person name="Nishi T."/>
            <person name="Shibahara T."/>
            <person name="Tanaka T."/>
            <person name="Ishii S."/>
            <person name="Yamamoto J."/>
            <person name="Saito K."/>
            <person name="Kawai Y."/>
            <person name="Isono Y."/>
            <person name="Nakamura Y."/>
            <person name="Nagahari K."/>
            <person name="Murakami K."/>
            <person name="Yasuda T."/>
            <person name="Iwayanagi T."/>
            <person name="Wagatsuma M."/>
            <person name="Shiratori A."/>
            <person name="Sudo H."/>
            <person name="Hosoiri T."/>
            <person name="Kaku Y."/>
            <person name="Kodaira H."/>
            <person name="Kondo H."/>
            <person name="Sugawara M."/>
            <person name="Takahashi M."/>
            <person name="Kanda K."/>
            <person name="Yokoi T."/>
            <person name="Furuya T."/>
            <person name="Kikkawa E."/>
            <person name="Omura Y."/>
            <person name="Abe K."/>
            <person name="Kamihara K."/>
            <person name="Katsuta N."/>
            <person name="Sato K."/>
            <person name="Tanikawa M."/>
            <person name="Yamazaki M."/>
            <person name="Ninomiya K."/>
            <person name="Ishibashi T."/>
            <person name="Yamashita H."/>
            <person name="Murakawa K."/>
            <person name="Fujimori K."/>
            <person name="Tanai H."/>
            <person name="Kimata M."/>
            <person name="Watanabe M."/>
            <person name="Hiraoka S."/>
            <person name="Chiba Y."/>
            <person name="Ishida S."/>
            <person name="Ono Y."/>
            <person name="Takiguchi S."/>
            <person name="Watanabe S."/>
            <person name="Yosida M."/>
            <person name="Hotuta T."/>
            <person name="Kusano J."/>
            <person name="Kanehori K."/>
            <person name="Takahashi-Fujii A."/>
            <person name="Hara H."/>
            <person name="Tanase T.-O."/>
            <person name="Nomura Y."/>
            <person name="Togiya S."/>
            <person name="Komai F."/>
            <person name="Hara R."/>
            <person name="Takeuchi K."/>
            <person name="Arita M."/>
            <person name="Imose N."/>
            <person name="Musashino K."/>
            <person name="Yuuki H."/>
            <person name="Oshima A."/>
            <person name="Sasaki N."/>
            <person name="Aotsuka S."/>
            <person name="Yoshikawa Y."/>
            <person name="Matsunawa H."/>
            <person name="Ichihara T."/>
            <person name="Shiohata N."/>
            <person name="Sano S."/>
            <person name="Moriya S."/>
            <person name="Momiyama H."/>
            <person name="Satoh N."/>
            <person name="Takami S."/>
            <person name="Terashima Y."/>
            <person name="Suzuki O."/>
            <person name="Nakagawa S."/>
            <person name="Senoh A."/>
            <person name="Mizoguchi H."/>
            <person name="Goto Y."/>
            <person name="Shimizu F."/>
            <person name="Wakebe H."/>
            <person name="Hishigaki H."/>
            <person name="Watanabe T."/>
            <person name="Sugiyama A."/>
            <person name="Takemoto M."/>
            <person name="Kawakami B."/>
            <person name="Yamazaki M."/>
            <person name="Watanabe K."/>
            <person name="Kumagai A."/>
            <person name="Itakura S."/>
            <person name="Fukuzumi Y."/>
            <person name="Fujimori Y."/>
            <person name="Komiyama M."/>
            <person name="Tashiro H."/>
            <person name="Tanigami A."/>
            <person name="Fujiwara T."/>
            <person name="Ono T."/>
            <person name="Yamada K."/>
            <person name="Fujii Y."/>
            <person name="Ozaki K."/>
            <person name="Hirao M."/>
            <person name="Ohmori Y."/>
            <person name="Kawabata A."/>
            <person name="Hikiji T."/>
            <person name="Kobatake N."/>
            <person name="Inagaki H."/>
            <person name="Ikema Y."/>
            <person name="Okamoto S."/>
            <person name="Okitani R."/>
            <person name="Kawakami T."/>
            <person name="Noguchi S."/>
            <person name="Itoh T."/>
            <person name="Shigeta K."/>
            <person name="Senba T."/>
            <person name="Matsumura K."/>
            <person name="Nakajima Y."/>
            <person name="Mizuno T."/>
            <person name="Morinaga M."/>
            <person name="Sasaki M."/>
            <person name="Togashi T."/>
            <person name="Oyama M."/>
            <person name="Hata H."/>
            <person name="Watanabe M."/>
            <person name="Komatsu T."/>
            <person name="Mizushima-Sugano J."/>
            <person name="Satoh T."/>
            <person name="Shirai Y."/>
            <person name="Takahashi Y."/>
            <person name="Nakagawa K."/>
            <person name="Okumura K."/>
            <person name="Nagase T."/>
            <person name="Nomura N."/>
            <person name="Kikuchi H."/>
            <person name="Masuho Y."/>
            <person name="Yamashita R."/>
            <person name="Nakai K."/>
            <person name="Yada T."/>
            <person name="Nakamura Y."/>
            <person name="Ohara O."/>
            <person name="Isogai T."/>
            <person name="Sugano S."/>
        </authorList>
    </citation>
    <scope>NUCLEOTIDE SEQUENCE [LARGE SCALE MRNA] (ISOFORM 1)</scope>
    <scope>VARIANT ARG-14</scope>
</reference>
<reference key="11">
    <citation type="submission" date="2004-06" db="EMBL/GenBank/DDBJ databases">
        <title>Cloning of human full open reading frames in Gateway(TM) system entry vector (pDONR201).</title>
        <authorList>
            <person name="Ebert L."/>
            <person name="Schick M."/>
            <person name="Neubert P."/>
            <person name="Schatten R."/>
            <person name="Henze S."/>
            <person name="Korn B."/>
        </authorList>
    </citation>
    <scope>NUCLEOTIDE SEQUENCE [LARGE SCALE MRNA] (ISOFORM 2)</scope>
</reference>
<reference key="12">
    <citation type="journal article" date="2003" name="Genome Res.">
        <title>Analysis of the gene-dense major histocompatibility complex class III region and its comparison to mouse.</title>
        <authorList>
            <person name="Xie T."/>
            <person name="Rowen L."/>
            <person name="Aguado B."/>
            <person name="Ahearn M.E."/>
            <person name="Madan A."/>
            <person name="Qin S."/>
            <person name="Campbell R.D."/>
            <person name="Hood L."/>
        </authorList>
    </citation>
    <scope>NUCLEOTIDE SEQUENCE [LARGE SCALE GENOMIC DNA]</scope>
    <scope>VARIANT ARG-14</scope>
</reference>
<reference key="13">
    <citation type="submission" date="1999-09" db="EMBL/GenBank/DDBJ databases">
        <title>Homo sapiens 2,229,817bp genomic DNA of 6p21.3 HLA class I region.</title>
        <authorList>
            <person name="Shiina S."/>
            <person name="Tamiya G."/>
            <person name="Oka A."/>
            <person name="Inoko H."/>
        </authorList>
    </citation>
    <scope>NUCLEOTIDE SEQUENCE [LARGE SCALE GENOMIC DNA]</scope>
</reference>
<reference key="14">
    <citation type="journal article" date="2003" name="Nature">
        <title>The DNA sequence and analysis of human chromosome 6.</title>
        <authorList>
            <person name="Mungall A.J."/>
            <person name="Palmer S.A."/>
            <person name="Sims S.K."/>
            <person name="Edwards C.A."/>
            <person name="Ashurst J.L."/>
            <person name="Wilming L."/>
            <person name="Jones M.C."/>
            <person name="Horton R."/>
            <person name="Hunt S.E."/>
            <person name="Scott C.E."/>
            <person name="Gilbert J.G.R."/>
            <person name="Clamp M.E."/>
            <person name="Bethel G."/>
            <person name="Milne S."/>
            <person name="Ainscough R."/>
            <person name="Almeida J.P."/>
            <person name="Ambrose K.D."/>
            <person name="Andrews T.D."/>
            <person name="Ashwell R.I.S."/>
            <person name="Babbage A.K."/>
            <person name="Bagguley C.L."/>
            <person name="Bailey J."/>
            <person name="Banerjee R."/>
            <person name="Barker D.J."/>
            <person name="Barlow K.F."/>
            <person name="Bates K."/>
            <person name="Beare D.M."/>
            <person name="Beasley H."/>
            <person name="Beasley O."/>
            <person name="Bird C.P."/>
            <person name="Blakey S.E."/>
            <person name="Bray-Allen S."/>
            <person name="Brook J."/>
            <person name="Brown A.J."/>
            <person name="Brown J.Y."/>
            <person name="Burford D.C."/>
            <person name="Burrill W."/>
            <person name="Burton J."/>
            <person name="Carder C."/>
            <person name="Carter N.P."/>
            <person name="Chapman J.C."/>
            <person name="Clark S.Y."/>
            <person name="Clark G."/>
            <person name="Clee C.M."/>
            <person name="Clegg S."/>
            <person name="Cobley V."/>
            <person name="Collier R.E."/>
            <person name="Collins J.E."/>
            <person name="Colman L.K."/>
            <person name="Corby N.R."/>
            <person name="Coville G.J."/>
            <person name="Culley K.M."/>
            <person name="Dhami P."/>
            <person name="Davies J."/>
            <person name="Dunn M."/>
            <person name="Earthrowl M.E."/>
            <person name="Ellington A.E."/>
            <person name="Evans K.A."/>
            <person name="Faulkner L."/>
            <person name="Francis M.D."/>
            <person name="Frankish A."/>
            <person name="Frankland J."/>
            <person name="French L."/>
            <person name="Garner P."/>
            <person name="Garnett J."/>
            <person name="Ghori M.J."/>
            <person name="Gilby L.M."/>
            <person name="Gillson C.J."/>
            <person name="Glithero R.J."/>
            <person name="Grafham D.V."/>
            <person name="Grant M."/>
            <person name="Gribble S."/>
            <person name="Griffiths C."/>
            <person name="Griffiths M.N.D."/>
            <person name="Hall R."/>
            <person name="Halls K.S."/>
            <person name="Hammond S."/>
            <person name="Harley J.L."/>
            <person name="Hart E.A."/>
            <person name="Heath P.D."/>
            <person name="Heathcott R."/>
            <person name="Holmes S.J."/>
            <person name="Howden P.J."/>
            <person name="Howe K.L."/>
            <person name="Howell G.R."/>
            <person name="Huckle E."/>
            <person name="Humphray S.J."/>
            <person name="Humphries M.D."/>
            <person name="Hunt A.R."/>
            <person name="Johnson C.M."/>
            <person name="Joy A.A."/>
            <person name="Kay M."/>
            <person name="Keenan S.J."/>
            <person name="Kimberley A.M."/>
            <person name="King A."/>
            <person name="Laird G.K."/>
            <person name="Langford C."/>
            <person name="Lawlor S."/>
            <person name="Leongamornlert D.A."/>
            <person name="Leversha M."/>
            <person name="Lloyd C.R."/>
            <person name="Lloyd D.M."/>
            <person name="Loveland J.E."/>
            <person name="Lovell J."/>
            <person name="Martin S."/>
            <person name="Mashreghi-Mohammadi M."/>
            <person name="Maslen G.L."/>
            <person name="Matthews L."/>
            <person name="McCann O.T."/>
            <person name="McLaren S.J."/>
            <person name="McLay K."/>
            <person name="McMurray A."/>
            <person name="Moore M.J.F."/>
            <person name="Mullikin J.C."/>
            <person name="Niblett D."/>
            <person name="Nickerson T."/>
            <person name="Novik K.L."/>
            <person name="Oliver K."/>
            <person name="Overton-Larty E.K."/>
            <person name="Parker A."/>
            <person name="Patel R."/>
            <person name="Pearce A.V."/>
            <person name="Peck A.I."/>
            <person name="Phillimore B.J.C.T."/>
            <person name="Phillips S."/>
            <person name="Plumb R.W."/>
            <person name="Porter K.M."/>
            <person name="Ramsey Y."/>
            <person name="Ranby S.A."/>
            <person name="Rice C.M."/>
            <person name="Ross M.T."/>
            <person name="Searle S.M."/>
            <person name="Sehra H.K."/>
            <person name="Sheridan E."/>
            <person name="Skuce C.D."/>
            <person name="Smith S."/>
            <person name="Smith M."/>
            <person name="Spraggon L."/>
            <person name="Squares S.L."/>
            <person name="Steward C.A."/>
            <person name="Sycamore N."/>
            <person name="Tamlyn-Hall G."/>
            <person name="Tester J."/>
            <person name="Theaker A.J."/>
            <person name="Thomas D.W."/>
            <person name="Thorpe A."/>
            <person name="Tracey A."/>
            <person name="Tromans A."/>
            <person name="Tubby B."/>
            <person name="Wall M."/>
            <person name="Wallis J.M."/>
            <person name="West A.P."/>
            <person name="White S.S."/>
            <person name="Whitehead S.L."/>
            <person name="Whittaker H."/>
            <person name="Wild A."/>
            <person name="Willey D.J."/>
            <person name="Wilmer T.E."/>
            <person name="Wood J.M."/>
            <person name="Wray P.W."/>
            <person name="Wyatt J.C."/>
            <person name="Young L."/>
            <person name="Younger R.M."/>
            <person name="Bentley D.R."/>
            <person name="Coulson A."/>
            <person name="Durbin R.M."/>
            <person name="Hubbard T."/>
            <person name="Sulston J.E."/>
            <person name="Dunham I."/>
            <person name="Rogers J."/>
            <person name="Beck S."/>
        </authorList>
    </citation>
    <scope>NUCLEOTIDE SEQUENCE [LARGE SCALE GENOMIC DNA]</scope>
</reference>
<reference key="15">
    <citation type="submission" date="2005-07" db="EMBL/GenBank/DDBJ databases">
        <authorList>
            <person name="Mural R.J."/>
            <person name="Istrail S."/>
            <person name="Sutton G.G."/>
            <person name="Florea L."/>
            <person name="Halpern A.L."/>
            <person name="Mobarry C.M."/>
            <person name="Lippert R."/>
            <person name="Walenz B."/>
            <person name="Shatkay H."/>
            <person name="Dew I."/>
            <person name="Miller J.R."/>
            <person name="Flanigan M.J."/>
            <person name="Edwards N.J."/>
            <person name="Bolanos R."/>
            <person name="Fasulo D."/>
            <person name="Halldorsson B.V."/>
            <person name="Hannenhalli S."/>
            <person name="Turner R."/>
            <person name="Yooseph S."/>
            <person name="Lu F."/>
            <person name="Nusskern D.R."/>
            <person name="Shue B.C."/>
            <person name="Zheng X.H."/>
            <person name="Zhong F."/>
            <person name="Delcher A.L."/>
            <person name="Huson D.H."/>
            <person name="Kravitz S.A."/>
            <person name="Mouchard L."/>
            <person name="Reinert K."/>
            <person name="Remington K.A."/>
            <person name="Clark A.G."/>
            <person name="Waterman M.S."/>
            <person name="Eichler E.E."/>
            <person name="Adams M.D."/>
            <person name="Hunkapiller M.W."/>
            <person name="Myers E.W."/>
            <person name="Venter J.C."/>
        </authorList>
    </citation>
    <scope>NUCLEOTIDE SEQUENCE [LARGE SCALE GENOMIC DNA]</scope>
</reference>
<reference key="16">
    <citation type="journal article" date="2004" name="Genome Res.">
        <title>The status, quality, and expansion of the NIH full-length cDNA project: the Mammalian Gene Collection (MGC).</title>
        <authorList>
            <consortium name="The MGC Project Team"/>
        </authorList>
    </citation>
    <scope>NUCLEOTIDE SEQUENCE [LARGE SCALE MRNA] (ISOFORM 1)</scope>
    <source>
        <tissue>Prostate</tissue>
    </source>
</reference>
<reference key="17">
    <citation type="journal article" date="2004" name="Arterioscler. Thromb. Vasc. Biol.">
        <title>AIF-1 expression modulates proliferation of human vascular smooth muscle cells by autocrine expression of G-CSF.</title>
        <authorList>
            <person name="Chen X."/>
            <person name="Kelemen S.E."/>
            <person name="Autieri M.V."/>
        </authorList>
    </citation>
    <scope>FUNCTION</scope>
</reference>
<reference key="18">
    <citation type="journal article" date="2005" name="Am. J. Pathol.">
        <title>Expression of allograft inflammatory factor-1 in T lymphocytes: a role in T-lymphocyte activation and proliferative arteriopathies.</title>
        <authorList>
            <person name="Kelemen S.E."/>
            <person name="Autieri M.V."/>
        </authorList>
    </citation>
    <scope>FUNCTION</scope>
    <scope>INTERACTION WITH ACTIN</scope>
    <scope>TISSUE SPECIFICITY</scope>
</reference>
<reference key="19">
    <citation type="journal article" date="2008" name="FEBS J.">
        <title>Structural and functional characterization of human Iba proteins.</title>
        <authorList>
            <person name="Schulze J.O."/>
            <person name="Quedenau C."/>
            <person name="Roske Y."/>
            <person name="Adam T."/>
            <person name="Schueler H."/>
            <person name="Behlke J."/>
            <person name="Turnbull A.P."/>
            <person name="Sievert V."/>
            <person name="Scheich C."/>
            <person name="Mueller U."/>
            <person name="Heinemann U."/>
            <person name="Buessow K."/>
        </authorList>
    </citation>
    <scope>FUNCTION</scope>
    <scope>SUBUNIT</scope>
</reference>
<reference key="20">
    <citation type="journal article" date="2009" name="Science">
        <title>Lysine acetylation targets protein complexes and co-regulates major cellular functions.</title>
        <authorList>
            <person name="Choudhary C."/>
            <person name="Kumar C."/>
            <person name="Gnad F."/>
            <person name="Nielsen M.L."/>
            <person name="Rehman M."/>
            <person name="Walther T.C."/>
            <person name="Olsen J.V."/>
            <person name="Mann M."/>
        </authorList>
    </citation>
    <scope>ACETYLATION [LARGE SCALE ANALYSIS] AT LYS-11</scope>
    <scope>IDENTIFICATION BY MASS SPECTROMETRY [LARGE SCALE ANALYSIS]</scope>
</reference>
<reference key="21">
    <citation type="journal article" date="2013" name="J. Proteome Res.">
        <title>Toward a comprehensive characterization of a human cancer cell phosphoproteome.</title>
        <authorList>
            <person name="Zhou H."/>
            <person name="Di Palma S."/>
            <person name="Preisinger C."/>
            <person name="Peng M."/>
            <person name="Polat A.N."/>
            <person name="Heck A.J."/>
            <person name="Mohammed S."/>
        </authorList>
    </citation>
    <scope>PHOSPHORYLATION [LARGE SCALE ANALYSIS] AT SER-39</scope>
    <scope>IDENTIFICATION BY MASS SPECTROMETRY [LARGE SCALE ANALYSIS]</scope>
    <source>
        <tissue>Erythroleukemia</tissue>
    </source>
</reference>
<reference key="22">
    <citation type="journal article" date="2014" name="J. Proteomics">
        <title>An enzyme assisted RP-RPLC approach for in-depth analysis of human liver phosphoproteome.</title>
        <authorList>
            <person name="Bian Y."/>
            <person name="Song C."/>
            <person name="Cheng K."/>
            <person name="Dong M."/>
            <person name="Wang F."/>
            <person name="Huang J."/>
            <person name="Sun D."/>
            <person name="Wang L."/>
            <person name="Ye M."/>
            <person name="Zou H."/>
        </authorList>
    </citation>
    <scope>PHOSPHORYLATION [LARGE SCALE ANALYSIS] AT SER-39</scope>
    <scope>IDENTIFICATION BY MASS SPECTROMETRY [LARGE SCALE ANALYSIS]</scope>
    <source>
        <tissue>Liver</tissue>
    </source>
</reference>
<reference key="23">
    <citation type="journal article" date="2006" name="J. Mol. Biol.">
        <title>X-ray structures of the microglia/macrophage-specific protein Iba1 from human and mouse demonstrate novel molecular conformation change induced by calcium binding.</title>
        <authorList>
            <person name="Yamada M."/>
            <person name="Ohsawa K."/>
            <person name="Imai Y."/>
            <person name="Kohsaka S."/>
            <person name="Kamitori S."/>
        </authorList>
    </citation>
    <scope>X-RAY CRYSTALLOGRAPHY (1.9 ANGSTROMS) OF 17-123 OF APOPROTEIN</scope>
</reference>
<reference key="24">
    <citation type="submission" date="2009-02" db="PDB data bank">
        <title>NMR structure of the human allograft inflammatory factor 1.</title>
        <authorList>
            <consortium name="Center for eukaryotic structural genomics (CESG)"/>
        </authorList>
    </citation>
    <scope>STRUCTURE BY NMR OF 2-147</scope>
</reference>
<name>AIF1_HUMAN</name>
<keyword id="KW-0002">3D-structure</keyword>
<keyword id="KW-0007">Acetylation</keyword>
<keyword id="KW-0009">Actin-binding</keyword>
<keyword id="KW-0025">Alternative splicing</keyword>
<keyword id="KW-0106">Calcium</keyword>
<keyword id="KW-1003">Cell membrane</keyword>
<keyword id="KW-0966">Cell projection</keyword>
<keyword id="KW-0963">Cytoplasm</keyword>
<keyword id="KW-0206">Cytoskeleton</keyword>
<keyword id="KW-0472">Membrane</keyword>
<keyword id="KW-0479">Metal-binding</keyword>
<keyword id="KW-0597">Phosphoprotein</keyword>
<keyword id="KW-1267">Proteomics identification</keyword>
<keyword id="KW-1185">Reference proteome</keyword>
<keyword id="KW-0677">Repeat</keyword>
<sequence>MSQTRDLQGGKAFGLLKAQQEERLDEINKQFLDDPKYSSDEDLPSKLEGFKEKYMEFDLNGNGDIDIMSLKRMLEKLGVPKTHLELKKLIGEVSSGSGETFSYPDFLRMMLGKRSAILKMILMYEEKAREKEKPTGPPAKKAISELP</sequence>
<accession>P55008</accession>
<accession>A8K406</accession>
<accession>O43904</accession>
<accession>Q9UIV4</accession>
<accession>Q9UKS9</accession>
<gene>
    <name type="primary">AIF1</name>
    <name type="synonym">G1</name>
    <name type="synonym">IBA1</name>
</gene>
<feature type="initiator methionine" description="Removed" evidence="2">
    <location>
        <position position="1"/>
    </location>
</feature>
<feature type="chain" id="PRO_0000073865" description="Allograft inflammatory factor 1">
    <location>
        <begin position="2"/>
        <end position="147"/>
    </location>
</feature>
<feature type="domain" description="EF-hand 1" evidence="3">
    <location>
        <begin position="45"/>
        <end position="80"/>
    </location>
</feature>
<feature type="domain" description="EF-hand 2; degenerate" evidence="15">
    <location>
        <begin position="81"/>
        <end position="115"/>
    </location>
</feature>
<feature type="region of interest" description="Disordered" evidence="4">
    <location>
        <begin position="128"/>
        <end position="147"/>
    </location>
</feature>
<feature type="binding site" evidence="15">
    <location>
        <position position="58"/>
    </location>
    <ligand>
        <name>Ca(2+)</name>
        <dbReference type="ChEBI" id="CHEBI:29108"/>
        <label>1</label>
    </ligand>
</feature>
<feature type="binding site" evidence="15">
    <location>
        <position position="60"/>
    </location>
    <ligand>
        <name>Ca(2+)</name>
        <dbReference type="ChEBI" id="CHEBI:29108"/>
        <label>1</label>
    </ligand>
</feature>
<feature type="binding site" evidence="15">
    <location>
        <position position="62"/>
    </location>
    <ligand>
        <name>Ca(2+)</name>
        <dbReference type="ChEBI" id="CHEBI:29108"/>
        <label>1</label>
    </ligand>
</feature>
<feature type="binding site" evidence="15">
    <location>
        <position position="64"/>
    </location>
    <ligand>
        <name>Ca(2+)</name>
        <dbReference type="ChEBI" id="CHEBI:29108"/>
        <label>1</label>
    </ligand>
</feature>
<feature type="binding site" evidence="15">
    <location>
        <position position="100"/>
    </location>
    <ligand>
        <name>Ca(2+)</name>
        <dbReference type="ChEBI" id="CHEBI:29108"/>
        <label>2</label>
    </ligand>
</feature>
<feature type="binding site" evidence="15">
    <location>
        <position position="105"/>
    </location>
    <ligand>
        <name>Ca(2+)</name>
        <dbReference type="ChEBI" id="CHEBI:29108"/>
        <label>2</label>
    </ligand>
</feature>
<feature type="modified residue" description="N-acetylserine" evidence="2">
    <location>
        <position position="2"/>
    </location>
</feature>
<feature type="modified residue" description="N6-acetyllysine" evidence="16">
    <location>
        <position position="11"/>
    </location>
</feature>
<feature type="modified residue" description="Phosphoserine" evidence="17 18">
    <location>
        <position position="39"/>
    </location>
</feature>
<feature type="splice variant" id="VSP_043837" description="In isoform 3." evidence="10 14">
    <original>MSQTRDLQGGKAFGLLKAQQEERLDEINKQFLDDPKYSSDEDLPSKLEGFKEKYMEFDLNGNGDI</original>
    <variation>MEFDLNGNGDIGEKRVICGGRVVCRPKKTEVSPTCSIPHDLGGGPPTTVGGRRMGMRKWERRERVSPPSPHPHPLPP</variation>
    <location>
        <begin position="1"/>
        <end position="65"/>
    </location>
</feature>
<feature type="splice variant" id="VSP_043838" description="In isoform 2." evidence="11 12 13">
    <location>
        <begin position="1"/>
        <end position="54"/>
    </location>
</feature>
<feature type="splice variant" id="VSP_043839" description="In isoform 3." evidence="10 14">
    <location>
        <begin position="121"/>
        <end position="147"/>
    </location>
</feature>
<feature type="sequence variant" id="VAR_048665" description="In dbSNP:rs2736182." evidence="5 6">
    <original>G</original>
    <variation>R</variation>
    <location>
        <position position="14"/>
    </location>
</feature>
<feature type="sequence conflict" description="In Ref. 1; AAA92457." evidence="15" ref="1">
    <original>D</original>
    <variation>H</variation>
    <location>
        <position position="33"/>
    </location>
</feature>
<feature type="sequence conflict" description="In Ref. 1; AAA92457." evidence="15" ref="1">
    <original>KEKPTGPPAKKAISELP</original>
    <variation>RKTNTPPSQESPI</variation>
    <location>
        <begin position="131"/>
        <end position="147"/>
    </location>
</feature>
<feature type="strand" evidence="20">
    <location>
        <begin position="10"/>
        <end position="13"/>
    </location>
</feature>
<feature type="helix" evidence="19">
    <location>
        <begin position="20"/>
        <end position="32"/>
    </location>
</feature>
<feature type="helix" evidence="19">
    <location>
        <begin position="35"/>
        <end position="37"/>
    </location>
</feature>
<feature type="helix" evidence="19">
    <location>
        <begin position="43"/>
        <end position="54"/>
    </location>
</feature>
<feature type="helix" evidence="19">
    <location>
        <begin position="67"/>
        <end position="76"/>
    </location>
</feature>
<feature type="helix" evidence="19">
    <location>
        <begin position="83"/>
        <end position="93"/>
    </location>
</feature>
<feature type="strand" evidence="19">
    <location>
        <begin position="95"/>
        <end position="101"/>
    </location>
</feature>
<feature type="helix" evidence="19">
    <location>
        <begin position="103"/>
        <end position="110"/>
    </location>
</feature>
<feature type="strand" evidence="19">
    <location>
        <begin position="111"/>
        <end position="114"/>
    </location>
</feature>
<feature type="helix" evidence="19">
    <location>
        <begin position="117"/>
        <end position="122"/>
    </location>
</feature>
<proteinExistence type="evidence at protein level"/>
<dbReference type="EMBL" id="U49392">
    <property type="protein sequence ID" value="AAA92457.1"/>
    <property type="molecule type" value="mRNA"/>
</dbReference>
<dbReference type="EMBL" id="U95213">
    <property type="protein sequence ID" value="AAC24422.1"/>
    <property type="molecule type" value="mRNA"/>
</dbReference>
<dbReference type="EMBL" id="U19713">
    <property type="protein sequence ID" value="AAB05003.1"/>
    <property type="molecule type" value="mRNA"/>
</dbReference>
<dbReference type="EMBL" id="Y14768">
    <property type="protein sequence ID" value="CAA75060.1"/>
    <property type="molecule type" value="Genomic_DNA"/>
</dbReference>
<dbReference type="EMBL" id="Y14768">
    <property type="protein sequence ID" value="CAA75061.1"/>
    <property type="molecule type" value="Genomic_DNA"/>
</dbReference>
<dbReference type="EMBL" id="Y14768">
    <property type="protein sequence ID" value="CAA75062.1"/>
    <property type="molecule type" value="Genomic_DNA"/>
</dbReference>
<dbReference type="EMBL" id="D86438">
    <property type="protein sequence ID" value="BAA13088.1"/>
    <property type="molecule type" value="mRNA"/>
</dbReference>
<dbReference type="EMBL" id="AF299327">
    <property type="protein sequence ID" value="AAG39110.1"/>
    <property type="molecule type" value="mRNA"/>
</dbReference>
<dbReference type="EMBL" id="EF070982">
    <property type="protein sequence ID" value="ABK35646.1"/>
    <property type="molecule type" value="mRNA"/>
</dbReference>
<dbReference type="EMBL" id="AK290771">
    <property type="protein sequence ID" value="BAF83460.1"/>
    <property type="molecule type" value="mRNA"/>
</dbReference>
<dbReference type="EMBL" id="CR542153">
    <property type="protein sequence ID" value="CAG46950.1"/>
    <property type="molecule type" value="mRNA"/>
</dbReference>
<dbReference type="EMBL" id="AF129756">
    <property type="protein sequence ID" value="AAD18087.1"/>
    <property type="molecule type" value="Genomic_DNA"/>
</dbReference>
<dbReference type="EMBL" id="BA000025">
    <property type="protein sequence ID" value="BAB63392.1"/>
    <property type="molecule type" value="Genomic_DNA"/>
</dbReference>
<dbReference type="EMBL" id="AL662801">
    <property type="status" value="NOT_ANNOTATED_CDS"/>
    <property type="molecule type" value="Genomic_DNA"/>
</dbReference>
<dbReference type="EMBL" id="AL662847">
    <property type="status" value="NOT_ANNOTATED_CDS"/>
    <property type="molecule type" value="Genomic_DNA"/>
</dbReference>
<dbReference type="EMBL" id="AL805934">
    <property type="status" value="NOT_ANNOTATED_CDS"/>
    <property type="molecule type" value="Genomic_DNA"/>
</dbReference>
<dbReference type="EMBL" id="BX248305">
    <property type="status" value="NOT_ANNOTATED_CDS"/>
    <property type="molecule type" value="Genomic_DNA"/>
</dbReference>
<dbReference type="EMBL" id="CR753892">
    <property type="status" value="NOT_ANNOTATED_CDS"/>
    <property type="molecule type" value="Genomic_DNA"/>
</dbReference>
<dbReference type="EMBL" id="CR759761">
    <property type="status" value="NOT_ANNOTATED_CDS"/>
    <property type="molecule type" value="Genomic_DNA"/>
</dbReference>
<dbReference type="EMBL" id="CH471081">
    <property type="protein sequence ID" value="EAX03442.1"/>
    <property type="molecule type" value="Genomic_DNA"/>
</dbReference>
<dbReference type="EMBL" id="CH471081">
    <property type="protein sequence ID" value="EAX03446.1"/>
    <property type="molecule type" value="Genomic_DNA"/>
</dbReference>
<dbReference type="EMBL" id="BC009474">
    <property type="protein sequence ID" value="AAH09474.1"/>
    <property type="molecule type" value="mRNA"/>
</dbReference>
<dbReference type="CCDS" id="CCDS34398.1">
    <molecule id="P55008-2"/>
</dbReference>
<dbReference type="CCDS" id="CCDS4706.1">
    <molecule id="P55008-1"/>
</dbReference>
<dbReference type="PIR" id="JC5246">
    <property type="entry name" value="JC5246"/>
</dbReference>
<dbReference type="RefSeq" id="NP_001305899.1">
    <molecule id="P55008-2"/>
    <property type="nucleotide sequence ID" value="NM_001318970.2"/>
</dbReference>
<dbReference type="RefSeq" id="NP_001614.3">
    <molecule id="P55008-1"/>
    <property type="nucleotide sequence ID" value="NM_001623.4"/>
</dbReference>
<dbReference type="RefSeq" id="NP_116573.1">
    <molecule id="P55008-2"/>
    <property type="nucleotide sequence ID" value="NM_032955.3"/>
</dbReference>
<dbReference type="RefSeq" id="XP_016865821.1">
    <property type="nucleotide sequence ID" value="XM_017010332.1"/>
</dbReference>
<dbReference type="PDB" id="2D58">
    <property type="method" value="X-ray"/>
    <property type="resolution" value="1.90 A"/>
    <property type="chains" value="A=17-123"/>
</dbReference>
<dbReference type="PDB" id="2G2B">
    <property type="method" value="NMR"/>
    <property type="chains" value="A=2-147"/>
</dbReference>
<dbReference type="PDBsum" id="2D58"/>
<dbReference type="PDBsum" id="2G2B"/>
<dbReference type="BMRB" id="P55008"/>
<dbReference type="SMR" id="P55008"/>
<dbReference type="BioGRID" id="106702">
    <property type="interactions" value="11"/>
</dbReference>
<dbReference type="FunCoup" id="P55008">
    <property type="interactions" value="73"/>
</dbReference>
<dbReference type="IntAct" id="P55008">
    <property type="interactions" value="13"/>
</dbReference>
<dbReference type="MINT" id="P55008"/>
<dbReference type="STRING" id="9606.ENSP00000365227"/>
<dbReference type="iPTMnet" id="P55008"/>
<dbReference type="PhosphoSitePlus" id="P55008"/>
<dbReference type="BioMuta" id="AIF1"/>
<dbReference type="DMDM" id="1703217"/>
<dbReference type="jPOST" id="P55008"/>
<dbReference type="MassIVE" id="P55008"/>
<dbReference type="PaxDb" id="9606-ENSP00000365227"/>
<dbReference type="PeptideAtlas" id="P55008"/>
<dbReference type="ProteomicsDB" id="56753">
    <molecule id="P55008-1"/>
</dbReference>
<dbReference type="ProteomicsDB" id="56754">
    <molecule id="P55008-2"/>
</dbReference>
<dbReference type="ProteomicsDB" id="56755">
    <molecule id="P55008-3"/>
</dbReference>
<dbReference type="Pumba" id="P55008"/>
<dbReference type="TopDownProteomics" id="P55008-1">
    <molecule id="P55008-1"/>
</dbReference>
<dbReference type="Antibodypedia" id="27285">
    <property type="antibodies" value="897 antibodies from 44 providers"/>
</dbReference>
<dbReference type="DNASU" id="199"/>
<dbReference type="Ensembl" id="ENST00000376049.4">
    <molecule id="P55008-2"/>
    <property type="protein sequence ID" value="ENSP00000365217.4"/>
    <property type="gene ID" value="ENSG00000204472.13"/>
</dbReference>
<dbReference type="Ensembl" id="ENST00000376059.8">
    <molecule id="P55008-1"/>
    <property type="protein sequence ID" value="ENSP00000365227.3"/>
    <property type="gene ID" value="ENSG00000204472.13"/>
</dbReference>
<dbReference type="Ensembl" id="ENST00000383473.4">
    <molecule id="P55008-2"/>
    <property type="protein sequence ID" value="ENSP00000372965.4"/>
    <property type="gene ID" value="ENSG00000206428.9"/>
</dbReference>
<dbReference type="Ensembl" id="ENST00000383474.8">
    <molecule id="P55008-1"/>
    <property type="protein sequence ID" value="ENSP00000372966.4"/>
    <property type="gene ID" value="ENSG00000206428.9"/>
</dbReference>
<dbReference type="Ensembl" id="ENST00000413349.6">
    <molecule id="P55008-1"/>
    <property type="protein sequence ID" value="ENSP00000416061.2"/>
    <property type="gene ID" value="ENSG00000235985.7"/>
</dbReference>
<dbReference type="Ensembl" id="ENST00000414149.6">
    <molecule id="P55008-1"/>
    <property type="protein sequence ID" value="ENSP00000391720.2"/>
    <property type="gene ID" value="ENSG00000237727.7"/>
</dbReference>
<dbReference type="Ensembl" id="ENST00000415830.2">
    <molecule id="P55008-2"/>
    <property type="protein sequence ID" value="ENSP00000413709.2"/>
    <property type="gene ID" value="ENSG00000235985.7"/>
</dbReference>
<dbReference type="Ensembl" id="ENST00000416422.2">
    <molecule id="P55008-2"/>
    <property type="protein sequence ID" value="ENSP00000399901.2"/>
    <property type="gene ID" value="ENSG00000234836.7"/>
</dbReference>
<dbReference type="Ensembl" id="ENST00000419376.2">
    <molecule id="P55008-2"/>
    <property type="protein sequence ID" value="ENSP00000401433.2"/>
    <property type="gene ID" value="ENSG00000237727.7"/>
</dbReference>
<dbReference type="Ensembl" id="ENST00000424944.2">
    <molecule id="P55008-2"/>
    <property type="protein sequence ID" value="ENSP00000399621.2"/>
    <property type="gene ID" value="ENSG00000235588.8"/>
</dbReference>
<dbReference type="Ensembl" id="ENST00000425748.6">
    <molecule id="P55008-1"/>
    <property type="protein sequence ID" value="ENSP00000398013.2"/>
    <property type="gene ID" value="ENSG00000234836.7"/>
</dbReference>
<dbReference type="Ensembl" id="ENST00000440907.6">
    <molecule id="P55008-1"/>
    <property type="protein sequence ID" value="ENSP00000397842.2"/>
    <property type="gene ID" value="ENSG00000235588.8"/>
</dbReference>
<dbReference type="GeneID" id="199"/>
<dbReference type="KEGG" id="hsa:199"/>
<dbReference type="MANE-Select" id="ENST00000376059.8">
    <property type="protein sequence ID" value="ENSP00000365227.3"/>
    <property type="RefSeq nucleotide sequence ID" value="NM_001623.5"/>
    <property type="RefSeq protein sequence ID" value="NP_001614.3"/>
</dbReference>
<dbReference type="UCSC" id="uc003nva.4">
    <molecule id="P55008-1"/>
    <property type="organism name" value="human"/>
</dbReference>
<dbReference type="AGR" id="HGNC:352"/>
<dbReference type="CTD" id="199"/>
<dbReference type="DisGeNET" id="199"/>
<dbReference type="GeneCards" id="AIF1"/>
<dbReference type="HGNC" id="HGNC:352">
    <property type="gene designation" value="AIF1"/>
</dbReference>
<dbReference type="HPA" id="ENSG00000204472">
    <property type="expression patterns" value="Tissue enhanced (bone marrow, lymphoid tissue)"/>
</dbReference>
<dbReference type="MIM" id="601833">
    <property type="type" value="gene"/>
</dbReference>
<dbReference type="neXtProt" id="NX_P55008"/>
<dbReference type="OpenTargets" id="ENSG00000204472"/>
<dbReference type="PharmGKB" id="PA24646"/>
<dbReference type="VEuPathDB" id="HostDB:ENSG00000204472"/>
<dbReference type="eggNOG" id="KOG0027">
    <property type="taxonomic scope" value="Eukaryota"/>
</dbReference>
<dbReference type="GeneTree" id="ENSGT00390000013846"/>
<dbReference type="HOGENOM" id="CLU_134149_0_0_1"/>
<dbReference type="InParanoid" id="P55008"/>
<dbReference type="OMA" id="RETINYH"/>
<dbReference type="OrthoDB" id="26525at2759"/>
<dbReference type="PAN-GO" id="P55008">
    <property type="GO annotations" value="6 GO annotations based on evolutionary models"/>
</dbReference>
<dbReference type="PhylomeDB" id="P55008"/>
<dbReference type="TreeFam" id="TF320736"/>
<dbReference type="PathwayCommons" id="P55008"/>
<dbReference type="SignaLink" id="P55008"/>
<dbReference type="BioGRID-ORCS" id="199">
    <property type="hits" value="6 hits in 1120 CRISPR screens"/>
</dbReference>
<dbReference type="ChiTaRS" id="AIF1">
    <property type="organism name" value="human"/>
</dbReference>
<dbReference type="EvolutionaryTrace" id="P55008"/>
<dbReference type="GeneWiki" id="AIF1"/>
<dbReference type="GenomeRNAi" id="199"/>
<dbReference type="Pharos" id="P55008">
    <property type="development level" value="Tbio"/>
</dbReference>
<dbReference type="PRO" id="PR:P55008"/>
<dbReference type="Proteomes" id="UP000005640">
    <property type="component" value="Chromosome 6"/>
</dbReference>
<dbReference type="RNAct" id="P55008">
    <property type="molecule type" value="protein"/>
</dbReference>
<dbReference type="Bgee" id="ENSG00000204472">
    <property type="expression patterns" value="Expressed in monocyte and 95 other cell types or tissues"/>
</dbReference>
<dbReference type="ExpressionAtlas" id="P55008">
    <property type="expression patterns" value="baseline and differential"/>
</dbReference>
<dbReference type="GO" id="GO:0005884">
    <property type="term" value="C:actin filament"/>
    <property type="evidence" value="ECO:0000250"/>
    <property type="project" value="ARUK-UCL"/>
</dbReference>
<dbReference type="GO" id="GO:0005737">
    <property type="term" value="C:cytoplasm"/>
    <property type="evidence" value="ECO:0000314"/>
    <property type="project" value="ARUK-UCL"/>
</dbReference>
<dbReference type="GO" id="GO:0005829">
    <property type="term" value="C:cytosol"/>
    <property type="evidence" value="ECO:0000314"/>
    <property type="project" value="UniProtKB"/>
</dbReference>
<dbReference type="GO" id="GO:0097386">
    <property type="term" value="C:glial cell projection"/>
    <property type="evidence" value="ECO:0007669"/>
    <property type="project" value="Ensembl"/>
</dbReference>
<dbReference type="GO" id="GO:0030027">
    <property type="term" value="C:lamellipodium"/>
    <property type="evidence" value="ECO:0000250"/>
    <property type="project" value="UniProtKB"/>
</dbReference>
<dbReference type="GO" id="GO:0005634">
    <property type="term" value="C:nucleus"/>
    <property type="evidence" value="ECO:0000314"/>
    <property type="project" value="UniProtKB"/>
</dbReference>
<dbReference type="GO" id="GO:0048471">
    <property type="term" value="C:perinuclear region of cytoplasm"/>
    <property type="evidence" value="ECO:0000314"/>
    <property type="project" value="UniProtKB"/>
</dbReference>
<dbReference type="GO" id="GO:0001891">
    <property type="term" value="C:phagocytic cup"/>
    <property type="evidence" value="ECO:0000250"/>
    <property type="project" value="UniProtKB"/>
</dbReference>
<dbReference type="GO" id="GO:0001726">
    <property type="term" value="C:ruffle"/>
    <property type="evidence" value="ECO:0000250"/>
    <property type="project" value="ARUK-UCL"/>
</dbReference>
<dbReference type="GO" id="GO:0032587">
    <property type="term" value="C:ruffle membrane"/>
    <property type="evidence" value="ECO:0007669"/>
    <property type="project" value="UniProtKB-SubCell"/>
</dbReference>
<dbReference type="GO" id="GO:0051015">
    <property type="term" value="F:actin filament binding"/>
    <property type="evidence" value="ECO:0000314"/>
    <property type="project" value="UniProtKB"/>
</dbReference>
<dbReference type="GO" id="GO:0005509">
    <property type="term" value="F:calcium ion binding"/>
    <property type="evidence" value="ECO:0000250"/>
    <property type="project" value="UniProtKB"/>
</dbReference>
<dbReference type="GO" id="GO:0051764">
    <property type="term" value="P:actin crosslink formation"/>
    <property type="evidence" value="ECO:0000250"/>
    <property type="project" value="ARUK-UCL"/>
</dbReference>
<dbReference type="GO" id="GO:0051017">
    <property type="term" value="P:actin filament bundle assembly"/>
    <property type="evidence" value="ECO:0000314"/>
    <property type="project" value="UniProtKB"/>
</dbReference>
<dbReference type="GO" id="GO:0030041">
    <property type="term" value="P:actin filament polymerization"/>
    <property type="evidence" value="ECO:0000314"/>
    <property type="project" value="UniProtKB"/>
</dbReference>
<dbReference type="GO" id="GO:0034599">
    <property type="term" value="P:cellular response to oxidative stress"/>
    <property type="evidence" value="ECO:0000314"/>
    <property type="project" value="ARUK-UCL"/>
</dbReference>
<dbReference type="GO" id="GO:0071346">
    <property type="term" value="P:cellular response to type II interferon"/>
    <property type="evidence" value="ECO:0000270"/>
    <property type="project" value="UniProtKB"/>
</dbReference>
<dbReference type="GO" id="GO:0006954">
    <property type="term" value="P:inflammatory response"/>
    <property type="evidence" value="ECO:0000250"/>
    <property type="project" value="UniProtKB"/>
</dbReference>
<dbReference type="GO" id="GO:0001774">
    <property type="term" value="P:microglial cell activation"/>
    <property type="evidence" value="ECO:0000303"/>
    <property type="project" value="UniProtKB"/>
</dbReference>
<dbReference type="GO" id="GO:0071672">
    <property type="term" value="P:negative regulation of smooth muscle cell chemotaxis"/>
    <property type="evidence" value="ECO:0000314"/>
    <property type="project" value="UniProtKB"/>
</dbReference>
<dbReference type="GO" id="GO:0048662">
    <property type="term" value="P:negative regulation of smooth muscle cell proliferation"/>
    <property type="evidence" value="ECO:0000314"/>
    <property type="project" value="UniProtKB"/>
</dbReference>
<dbReference type="GO" id="GO:0030046">
    <property type="term" value="P:parallel actin filament bundle assembly"/>
    <property type="evidence" value="ECO:0000250"/>
    <property type="project" value="ARUK-UCL"/>
</dbReference>
<dbReference type="GO" id="GO:0006911">
    <property type="term" value="P:phagocytosis, engulfment"/>
    <property type="evidence" value="ECO:0000250"/>
    <property type="project" value="UniProtKB"/>
</dbReference>
<dbReference type="GO" id="GO:0030335">
    <property type="term" value="P:positive regulation of cell migration"/>
    <property type="evidence" value="ECO:0000314"/>
    <property type="project" value="ARUK-UCL"/>
</dbReference>
<dbReference type="GO" id="GO:0008284">
    <property type="term" value="P:positive regulation of cell population proliferation"/>
    <property type="evidence" value="ECO:0000314"/>
    <property type="project" value="ARUK-UCL"/>
</dbReference>
<dbReference type="GO" id="GO:0032722">
    <property type="term" value="P:positive regulation of chemokine production"/>
    <property type="evidence" value="ECO:0000314"/>
    <property type="project" value="ARUK-UCL"/>
</dbReference>
<dbReference type="GO" id="GO:0050921">
    <property type="term" value="P:positive regulation of chemotaxis"/>
    <property type="evidence" value="ECO:0000314"/>
    <property type="project" value="ARUK-UCL"/>
</dbReference>
<dbReference type="GO" id="GO:0090271">
    <property type="term" value="P:positive regulation of fibroblast growth factor production"/>
    <property type="evidence" value="ECO:0000314"/>
    <property type="project" value="ARUK-UCL"/>
</dbReference>
<dbReference type="GO" id="GO:1900087">
    <property type="term" value="P:positive regulation of G1/S transition of mitotic cell cycle"/>
    <property type="evidence" value="ECO:0000314"/>
    <property type="project" value="UniProtKB"/>
</dbReference>
<dbReference type="GO" id="GO:0032755">
    <property type="term" value="P:positive regulation of interleukin-6 production"/>
    <property type="evidence" value="ECO:0000314"/>
    <property type="project" value="ARUK-UCL"/>
</dbReference>
<dbReference type="GO" id="GO:0090026">
    <property type="term" value="P:positive regulation of monocyte chemotaxis"/>
    <property type="evidence" value="ECO:0000314"/>
    <property type="project" value="UniProtKB"/>
</dbReference>
<dbReference type="GO" id="GO:0071677">
    <property type="term" value="P:positive regulation of mononuclear cell migration"/>
    <property type="evidence" value="ECO:0000314"/>
    <property type="project" value="ARUK-UCL"/>
</dbReference>
<dbReference type="GO" id="GO:0071673">
    <property type="term" value="P:positive regulation of smooth muscle cell chemotaxis"/>
    <property type="evidence" value="ECO:0000314"/>
    <property type="project" value="UniProtKB"/>
</dbReference>
<dbReference type="GO" id="GO:0048661">
    <property type="term" value="P:positive regulation of smooth muscle cell proliferation"/>
    <property type="evidence" value="ECO:0000314"/>
    <property type="project" value="UniProtKB"/>
</dbReference>
<dbReference type="GO" id="GO:2000406">
    <property type="term" value="P:positive regulation of T cell migration"/>
    <property type="evidence" value="ECO:0000314"/>
    <property type="project" value="UniProtKB"/>
</dbReference>
<dbReference type="GO" id="GO:0042102">
    <property type="term" value="P:positive regulation of T cell proliferation"/>
    <property type="evidence" value="ECO:0000314"/>
    <property type="project" value="UniProtKB"/>
</dbReference>
<dbReference type="GO" id="GO:0016601">
    <property type="term" value="P:Rac protein signal transduction"/>
    <property type="evidence" value="ECO:0000250"/>
    <property type="project" value="UniProtKB"/>
</dbReference>
<dbReference type="GO" id="GO:0010468">
    <property type="term" value="P:regulation of gene expression"/>
    <property type="evidence" value="ECO:0007005"/>
    <property type="project" value="ARUK-UCL"/>
</dbReference>
<dbReference type="GO" id="GO:0097178">
    <property type="term" value="P:ruffle assembly"/>
    <property type="evidence" value="ECO:0000250"/>
    <property type="project" value="UniProtKB"/>
</dbReference>
<dbReference type="FunFam" id="1.10.238.10:FF:000106">
    <property type="entry name" value="Allograft inflammatory factor 1"/>
    <property type="match status" value="1"/>
</dbReference>
<dbReference type="Gene3D" id="1.10.238.10">
    <property type="entry name" value="EF-hand"/>
    <property type="match status" value="1"/>
</dbReference>
<dbReference type="InterPro" id="IPR049025">
    <property type="entry name" value="AIF-1_EF_pair"/>
</dbReference>
<dbReference type="InterPro" id="IPR042433">
    <property type="entry name" value="AIF1/AIF1L"/>
</dbReference>
<dbReference type="InterPro" id="IPR011992">
    <property type="entry name" value="EF-hand-dom_pair"/>
</dbReference>
<dbReference type="InterPro" id="IPR002048">
    <property type="entry name" value="EF_hand_dom"/>
</dbReference>
<dbReference type="PANTHER" id="PTHR10356:SF4">
    <property type="entry name" value="ALLOGRAFT INFLAMMATORY FACTOR 1"/>
    <property type="match status" value="1"/>
</dbReference>
<dbReference type="PANTHER" id="PTHR10356">
    <property type="entry name" value="ALLOGRAFT INFLAMMATORY FACTOR-1"/>
    <property type="match status" value="1"/>
</dbReference>
<dbReference type="Pfam" id="PF21008">
    <property type="entry name" value="AIF-1"/>
    <property type="match status" value="1"/>
</dbReference>
<dbReference type="SUPFAM" id="SSF47473">
    <property type="entry name" value="EF-hand"/>
    <property type="match status" value="1"/>
</dbReference>
<dbReference type="PROSITE" id="PS50222">
    <property type="entry name" value="EF_HAND_2"/>
    <property type="match status" value="1"/>
</dbReference>